<name>YBJQ_SALCH</name>
<organism>
    <name type="scientific">Salmonella choleraesuis (strain SC-B67)</name>
    <dbReference type="NCBI Taxonomy" id="321314"/>
    <lineage>
        <taxon>Bacteria</taxon>
        <taxon>Pseudomonadati</taxon>
        <taxon>Pseudomonadota</taxon>
        <taxon>Gammaproteobacteria</taxon>
        <taxon>Enterobacterales</taxon>
        <taxon>Enterobacteriaceae</taxon>
        <taxon>Salmonella</taxon>
    </lineage>
</organism>
<reference key="1">
    <citation type="journal article" date="2005" name="Nucleic Acids Res.">
        <title>The genome sequence of Salmonella enterica serovar Choleraesuis, a highly invasive and resistant zoonotic pathogen.</title>
        <authorList>
            <person name="Chiu C.-H."/>
            <person name="Tang P."/>
            <person name="Chu C."/>
            <person name="Hu S."/>
            <person name="Bao Q."/>
            <person name="Yu J."/>
            <person name="Chou Y.-Y."/>
            <person name="Wang H.-S."/>
            <person name="Lee Y.-S."/>
        </authorList>
    </citation>
    <scope>NUCLEOTIDE SEQUENCE [LARGE SCALE GENOMIC DNA]</scope>
    <source>
        <strain>SC-B67</strain>
    </source>
</reference>
<evidence type="ECO:0000255" key="1">
    <source>
        <dbReference type="HAMAP-Rule" id="MF_00338"/>
    </source>
</evidence>
<protein>
    <recommendedName>
        <fullName evidence="1">UPF0145 protein YbjQ</fullName>
    </recommendedName>
</protein>
<gene>
    <name evidence="1" type="primary">ybjQ</name>
    <name type="ordered locus">SCH_0885</name>
</gene>
<accession>Q57R70</accession>
<comment type="similarity">
    <text evidence="1">Belongs to the UPF0145 family.</text>
</comment>
<dbReference type="EMBL" id="AE017220">
    <property type="protein sequence ID" value="AAX64791.1"/>
    <property type="molecule type" value="Genomic_DNA"/>
</dbReference>
<dbReference type="RefSeq" id="WP_001160725.1">
    <property type="nucleotide sequence ID" value="NC_006905.1"/>
</dbReference>
<dbReference type="SMR" id="Q57R70"/>
<dbReference type="KEGG" id="sec:SCH_0885"/>
<dbReference type="HOGENOM" id="CLU_117144_3_0_6"/>
<dbReference type="Proteomes" id="UP000000538">
    <property type="component" value="Chromosome"/>
</dbReference>
<dbReference type="Gene3D" id="3.30.110.70">
    <property type="entry name" value="Hypothetical protein apc22750. Chain B"/>
    <property type="match status" value="1"/>
</dbReference>
<dbReference type="HAMAP" id="MF_00338">
    <property type="entry name" value="UPF0145"/>
    <property type="match status" value="1"/>
</dbReference>
<dbReference type="InterPro" id="IPR035439">
    <property type="entry name" value="UPF0145_dom_sf"/>
</dbReference>
<dbReference type="InterPro" id="IPR002765">
    <property type="entry name" value="UPF0145_YbjQ-like"/>
</dbReference>
<dbReference type="NCBIfam" id="NF002776">
    <property type="entry name" value="PRK02877.1"/>
    <property type="match status" value="1"/>
</dbReference>
<dbReference type="PANTHER" id="PTHR34068">
    <property type="entry name" value="UPF0145 PROTEIN YBJQ"/>
    <property type="match status" value="1"/>
</dbReference>
<dbReference type="PANTHER" id="PTHR34068:SF1">
    <property type="entry name" value="UPF0145 PROTEIN YBJQ"/>
    <property type="match status" value="1"/>
</dbReference>
<dbReference type="Pfam" id="PF01906">
    <property type="entry name" value="YbjQ_1"/>
    <property type="match status" value="1"/>
</dbReference>
<dbReference type="SUPFAM" id="SSF117782">
    <property type="entry name" value="YbjQ-like"/>
    <property type="match status" value="1"/>
</dbReference>
<proteinExistence type="inferred from homology"/>
<feature type="chain" id="PRO_0000225842" description="UPF0145 protein YbjQ">
    <location>
        <begin position="1"/>
        <end position="107"/>
    </location>
</feature>
<sequence length="107" mass="11437">MQFSTTPTLEGQSIVEYCGVVTGEAILGANIFRDFFAGIRDIVGGRSGAYEKELRKAREIAFQELGEQAKALGADAVVGIDIDYETVGKDGSMLMVSVSGTAVKTRR</sequence>